<feature type="chain" id="PRO_1000124442" description="Photosystem II reaction center protein M">
    <location>
        <begin position="1"/>
        <end position="38"/>
    </location>
</feature>
<feature type="transmembrane region" description="Helical" evidence="1">
    <location>
        <begin position="7"/>
        <end position="27"/>
    </location>
</feature>
<proteinExistence type="inferred from homology"/>
<dbReference type="EMBL" id="CP001037">
    <property type="protein sequence ID" value="ACC79063.1"/>
    <property type="molecule type" value="Genomic_DNA"/>
</dbReference>
<dbReference type="SMR" id="B2J4U1"/>
<dbReference type="STRING" id="63737.Npun_F0278"/>
<dbReference type="EnsemblBacteria" id="ACC79063">
    <property type="protein sequence ID" value="ACC79063"/>
    <property type="gene ID" value="Npun_F0278"/>
</dbReference>
<dbReference type="KEGG" id="npu:Npun_F0278"/>
<dbReference type="eggNOG" id="ENOG50339PB">
    <property type="taxonomic scope" value="Bacteria"/>
</dbReference>
<dbReference type="HOGENOM" id="CLU_215415_0_0_3"/>
<dbReference type="OrthoDB" id="532820at2"/>
<dbReference type="PhylomeDB" id="B2J4U1"/>
<dbReference type="Proteomes" id="UP000001191">
    <property type="component" value="Chromosome"/>
</dbReference>
<dbReference type="GO" id="GO:0009523">
    <property type="term" value="C:photosystem II"/>
    <property type="evidence" value="ECO:0007669"/>
    <property type="project" value="UniProtKB-KW"/>
</dbReference>
<dbReference type="GO" id="GO:0031676">
    <property type="term" value="C:plasma membrane-derived thylakoid membrane"/>
    <property type="evidence" value="ECO:0007669"/>
    <property type="project" value="UniProtKB-SubCell"/>
</dbReference>
<dbReference type="GO" id="GO:0019684">
    <property type="term" value="P:photosynthesis, light reaction"/>
    <property type="evidence" value="ECO:0007669"/>
    <property type="project" value="InterPro"/>
</dbReference>
<dbReference type="HAMAP" id="MF_00438">
    <property type="entry name" value="PSII_PsbM"/>
    <property type="match status" value="1"/>
</dbReference>
<dbReference type="InterPro" id="IPR007826">
    <property type="entry name" value="PSII_PsbM"/>
</dbReference>
<dbReference type="InterPro" id="IPR037269">
    <property type="entry name" value="PSII_PsbM_sf"/>
</dbReference>
<dbReference type="NCBIfam" id="TIGR03038">
    <property type="entry name" value="PS_II_psbM"/>
    <property type="match status" value="1"/>
</dbReference>
<dbReference type="PANTHER" id="PTHR35774">
    <property type="entry name" value="PHOTOSYSTEM II REACTION CENTER PROTEIN M"/>
    <property type="match status" value="1"/>
</dbReference>
<dbReference type="PANTHER" id="PTHR35774:SF1">
    <property type="entry name" value="PHOTOSYSTEM II REACTION CENTER PROTEIN M"/>
    <property type="match status" value="1"/>
</dbReference>
<dbReference type="Pfam" id="PF05151">
    <property type="entry name" value="PsbM"/>
    <property type="match status" value="1"/>
</dbReference>
<dbReference type="SUPFAM" id="SSF161033">
    <property type="entry name" value="Photosystem II reaction center protein M, PsbM"/>
    <property type="match status" value="1"/>
</dbReference>
<reference key="1">
    <citation type="journal article" date="2013" name="Plant Physiol.">
        <title>A Nostoc punctiforme Sugar Transporter Necessary to Establish a Cyanobacterium-Plant Symbiosis.</title>
        <authorList>
            <person name="Ekman M."/>
            <person name="Picossi S."/>
            <person name="Campbell E.L."/>
            <person name="Meeks J.C."/>
            <person name="Flores E."/>
        </authorList>
    </citation>
    <scope>NUCLEOTIDE SEQUENCE [LARGE SCALE GENOMIC DNA]</scope>
    <source>
        <strain>ATCC 29133 / PCC 73102</strain>
    </source>
</reference>
<keyword id="KW-0472">Membrane</keyword>
<keyword id="KW-0602">Photosynthesis</keyword>
<keyword id="KW-0604">Photosystem II</keyword>
<keyword id="KW-0674">Reaction center</keyword>
<keyword id="KW-1185">Reference proteome</keyword>
<keyword id="KW-0793">Thylakoid</keyword>
<keyword id="KW-0812">Transmembrane</keyword>
<keyword id="KW-1133">Transmembrane helix</keyword>
<gene>
    <name evidence="1" type="primary">psbM</name>
    <name type="ordered locus">Npun_F0278</name>
</gene>
<sequence length="38" mass="4155">MQVNDLGFVASILFVLVPTVFLLILYIQTASRQGGKDS</sequence>
<name>PSBM_NOSP7</name>
<organism>
    <name type="scientific">Nostoc punctiforme (strain ATCC 29133 / PCC 73102)</name>
    <dbReference type="NCBI Taxonomy" id="63737"/>
    <lineage>
        <taxon>Bacteria</taxon>
        <taxon>Bacillati</taxon>
        <taxon>Cyanobacteriota</taxon>
        <taxon>Cyanophyceae</taxon>
        <taxon>Nostocales</taxon>
        <taxon>Nostocaceae</taxon>
        <taxon>Nostoc</taxon>
    </lineage>
</organism>
<protein>
    <recommendedName>
        <fullName evidence="1">Photosystem II reaction center protein M</fullName>
        <shortName evidence="1">PSII-M</shortName>
    </recommendedName>
</protein>
<accession>B2J4U1</accession>
<comment type="function">
    <text evidence="1">One of the components of the core complex of photosystem II (PSII). PSII is a light-driven water:plastoquinone oxidoreductase that uses light energy to abstract electrons from H(2)O, generating O(2) and a proton gradient subsequently used for ATP formation. It consists of a core antenna complex that captures photons, and an electron transfer chain that converts photonic excitation into a charge separation. This subunit is found at the monomer-monomer interface.</text>
</comment>
<comment type="subunit">
    <text evidence="1">PSII is composed of 1 copy each of membrane proteins PsbA, PsbB, PsbC, PsbD, PsbE, PsbF, PsbH, PsbI, PsbJ, PsbK, PsbL, PsbM, PsbT, PsbX, PsbY, PsbZ, Psb30/Ycf12, peripheral proteins PsbO, CyanoQ (PsbQ), PsbU, PsbV and a large number of cofactors. It forms dimeric complexes.</text>
</comment>
<comment type="subcellular location">
    <subcellularLocation>
        <location evidence="1">Cellular thylakoid membrane</location>
        <topology evidence="1">Single-pass membrane protein</topology>
    </subcellularLocation>
</comment>
<comment type="similarity">
    <text evidence="1">Belongs to the PsbM family.</text>
</comment>
<evidence type="ECO:0000255" key="1">
    <source>
        <dbReference type="HAMAP-Rule" id="MF_00438"/>
    </source>
</evidence>